<keyword id="KW-0002">3D-structure</keyword>
<keyword id="KW-0963">Cytoplasm</keyword>
<keyword id="KW-0324">Glycolysis</keyword>
<keyword id="KW-0520">NAD</keyword>
<keyword id="KW-0547">Nucleotide-binding</keyword>
<keyword id="KW-0560">Oxidoreductase</keyword>
<keyword id="KW-1185">Reference proteome</keyword>
<reference key="1">
    <citation type="journal article" date="1995" name="Science">
        <title>The minimal gene complement of Mycoplasma genitalium.</title>
        <authorList>
            <person name="Fraser C.M."/>
            <person name="Gocayne J.D."/>
            <person name="White O."/>
            <person name="Adams M.D."/>
            <person name="Clayton R.A."/>
            <person name="Fleischmann R.D."/>
            <person name="Bult C.J."/>
            <person name="Kerlavage A.R."/>
            <person name="Sutton G.G."/>
            <person name="Kelley J.M."/>
            <person name="Fritchman J.L."/>
            <person name="Weidman J.F."/>
            <person name="Small K.V."/>
            <person name="Sandusky M."/>
            <person name="Fuhrmann J.L."/>
            <person name="Nguyen D.T."/>
            <person name="Utterback T.R."/>
            <person name="Saudek D.M."/>
            <person name="Phillips C.A."/>
            <person name="Merrick J.M."/>
            <person name="Tomb J.-F."/>
            <person name="Dougherty B.A."/>
            <person name="Bott K.F."/>
            <person name="Hu P.-C."/>
            <person name="Lucier T.S."/>
            <person name="Peterson S.N."/>
            <person name="Smith H.O."/>
            <person name="Hutchison C.A. III"/>
            <person name="Venter J.C."/>
        </authorList>
    </citation>
    <scope>NUCLEOTIDE SEQUENCE [LARGE SCALE GENOMIC DNA]</scope>
    <source>
        <strain>ATCC 33530 / DSM 19775 / NCTC 10195 / G37</strain>
    </source>
</reference>
<reference key="2">
    <citation type="journal article" date="1993" name="J. Bacteriol.">
        <title>A survey of the Mycoplasma genitalium genome by using random sequencing.</title>
        <authorList>
            <person name="Peterson S.N."/>
            <person name="Hu P.-C."/>
            <person name="Bott K.F."/>
            <person name="Hutchison C.A. III"/>
        </authorList>
    </citation>
    <scope>NUCLEOTIDE SEQUENCE [GENOMIC DNA] OF 1-81 AND 279-337</scope>
    <source>
        <strain>ATCC 33530 / DSM 19775 / NCTC 10195 / G37</strain>
    </source>
</reference>
<proteinExistence type="evidence at protein level"/>
<protein>
    <recommendedName>
        <fullName evidence="3">Glyceraldehyde-3-phosphate dehydrogenase</fullName>
        <shortName evidence="3">GAPDH</shortName>
        <ecNumber evidence="3">1.2.1.12</ecNumber>
    </recommendedName>
    <alternativeName>
        <fullName evidence="3">NAD-dependent glyceraldehyde-3-phosphate dehydrogenase</fullName>
    </alternativeName>
</protein>
<sequence length="337" mass="37098">MAAKNRTIKVAINGFGRIGRLVFRSLLSKANVEVVAINDLTQPEVLAHLLKYDSAHGELKRKITVKQNILQIDRKKVYVFSEKDPQNLPWDEHDIDVVIESTGRFVSEEGASLHLKAGAKRVIISAPAKEKTIRTVVYNVNHKTISSDDKIISAASCTTNCLAPLVHVLEKNFGIVYGTMLTVHAYTADQRLQDAPHNDLRRARAAAVNIVPTTTGAAKAIGLVVPEANGKLNGMSLRVPVLTGSIVELSVVLEKSPSVEQVNQAMKRFASASFKYCEDPIVSSDVVSSEYGSIFDSKLTNIVEVDGMKLYKVYAWYDNESSYVHQLVRVVSYCAKL</sequence>
<name>G3P_MYCGE</name>
<dbReference type="EC" id="1.2.1.12" evidence="3"/>
<dbReference type="EMBL" id="L43967">
    <property type="protein sequence ID" value="AAC71523.1"/>
    <property type="molecule type" value="Genomic_DNA"/>
</dbReference>
<dbReference type="EMBL" id="U02213">
    <property type="protein sequence ID" value="AAD12507.1"/>
    <property type="molecule type" value="Genomic_DNA"/>
</dbReference>
<dbReference type="EMBL" id="U02178">
    <property type="protein sequence ID" value="AAD12463.1"/>
    <property type="molecule type" value="Genomic_DNA"/>
</dbReference>
<dbReference type="PIR" id="C64233">
    <property type="entry name" value="C64233"/>
</dbReference>
<dbReference type="RefSeq" id="WP_009885879.1">
    <property type="nucleotide sequence ID" value="NC_000908.2"/>
</dbReference>
<dbReference type="PDB" id="7JWK">
    <property type="method" value="X-ray"/>
    <property type="resolution" value="2.20 A"/>
    <property type="chains" value="A/B/C/D=6-337"/>
</dbReference>
<dbReference type="PDBsum" id="7JWK"/>
<dbReference type="SMR" id="P47543"/>
<dbReference type="FunCoup" id="P47543">
    <property type="interactions" value="173"/>
</dbReference>
<dbReference type="STRING" id="243273.MG_301"/>
<dbReference type="MoonProt" id="P47543"/>
<dbReference type="GeneID" id="88282464"/>
<dbReference type="KEGG" id="mge:MG_301"/>
<dbReference type="eggNOG" id="COG0057">
    <property type="taxonomic scope" value="Bacteria"/>
</dbReference>
<dbReference type="HOGENOM" id="CLU_030140_0_2_14"/>
<dbReference type="InParanoid" id="P47543"/>
<dbReference type="OrthoDB" id="9803304at2"/>
<dbReference type="BioCyc" id="MGEN243273:G1GJ2-370-MONOMER"/>
<dbReference type="UniPathway" id="UPA00109">
    <property type="reaction ID" value="UER00184"/>
</dbReference>
<dbReference type="Proteomes" id="UP000000807">
    <property type="component" value="Chromosome"/>
</dbReference>
<dbReference type="GO" id="GO:0009986">
    <property type="term" value="C:cell surface"/>
    <property type="evidence" value="ECO:0000314"/>
    <property type="project" value="CAFA"/>
</dbReference>
<dbReference type="GO" id="GO:0005737">
    <property type="term" value="C:cytoplasm"/>
    <property type="evidence" value="ECO:0000314"/>
    <property type="project" value="CAFA"/>
</dbReference>
<dbReference type="GO" id="GO:0004365">
    <property type="term" value="F:glyceraldehyde-3-phosphate dehydrogenase (NAD+) (phosphorylating) activity"/>
    <property type="evidence" value="ECO:0000314"/>
    <property type="project" value="CAFA"/>
</dbReference>
<dbReference type="GO" id="GO:0140032">
    <property type="term" value="F:glycosylation-dependent protein binding"/>
    <property type="evidence" value="ECO:0000353"/>
    <property type="project" value="UniProtKB"/>
</dbReference>
<dbReference type="GO" id="GO:0051287">
    <property type="term" value="F:NAD binding"/>
    <property type="evidence" value="ECO:0000318"/>
    <property type="project" value="GO_Central"/>
</dbReference>
<dbReference type="GO" id="GO:0050661">
    <property type="term" value="F:NADP binding"/>
    <property type="evidence" value="ECO:0007669"/>
    <property type="project" value="InterPro"/>
</dbReference>
<dbReference type="GO" id="GO:0044650">
    <property type="term" value="P:adhesion of symbiont to host cell"/>
    <property type="evidence" value="ECO:0000314"/>
    <property type="project" value="CAFA"/>
</dbReference>
<dbReference type="GO" id="GO:0006006">
    <property type="term" value="P:glucose metabolic process"/>
    <property type="evidence" value="ECO:0000318"/>
    <property type="project" value="GO_Central"/>
</dbReference>
<dbReference type="GO" id="GO:0006096">
    <property type="term" value="P:glycolytic process"/>
    <property type="evidence" value="ECO:0007669"/>
    <property type="project" value="UniProtKB-UniPathway"/>
</dbReference>
<dbReference type="CDD" id="cd18126">
    <property type="entry name" value="GAPDH_I_C"/>
    <property type="match status" value="1"/>
</dbReference>
<dbReference type="CDD" id="cd05214">
    <property type="entry name" value="GAPDH_I_N"/>
    <property type="match status" value="1"/>
</dbReference>
<dbReference type="FunFam" id="3.30.360.10:FF:000002">
    <property type="entry name" value="Glyceraldehyde-3-phosphate dehydrogenase"/>
    <property type="match status" value="1"/>
</dbReference>
<dbReference type="FunFam" id="3.40.50.720:FF:000001">
    <property type="entry name" value="Glyceraldehyde-3-phosphate dehydrogenase"/>
    <property type="match status" value="1"/>
</dbReference>
<dbReference type="Gene3D" id="3.30.360.10">
    <property type="entry name" value="Dihydrodipicolinate Reductase, domain 2"/>
    <property type="match status" value="1"/>
</dbReference>
<dbReference type="Gene3D" id="3.40.50.720">
    <property type="entry name" value="NAD(P)-binding Rossmann-like Domain"/>
    <property type="match status" value="1"/>
</dbReference>
<dbReference type="InterPro" id="IPR020831">
    <property type="entry name" value="GlycerAld/Erythrose_P_DH"/>
</dbReference>
<dbReference type="InterPro" id="IPR020830">
    <property type="entry name" value="GlycerAld_3-P_DH_AS"/>
</dbReference>
<dbReference type="InterPro" id="IPR020829">
    <property type="entry name" value="GlycerAld_3-P_DH_cat"/>
</dbReference>
<dbReference type="InterPro" id="IPR020828">
    <property type="entry name" value="GlycerAld_3-P_DH_NAD(P)-bd"/>
</dbReference>
<dbReference type="InterPro" id="IPR006424">
    <property type="entry name" value="Glyceraldehyde-3-P_DH_1"/>
</dbReference>
<dbReference type="InterPro" id="IPR036291">
    <property type="entry name" value="NAD(P)-bd_dom_sf"/>
</dbReference>
<dbReference type="NCBIfam" id="TIGR01534">
    <property type="entry name" value="GAPDH-I"/>
    <property type="match status" value="1"/>
</dbReference>
<dbReference type="PANTHER" id="PTHR43148">
    <property type="entry name" value="GLYCERALDEHYDE-3-PHOSPHATE DEHYDROGENASE 2"/>
    <property type="match status" value="1"/>
</dbReference>
<dbReference type="Pfam" id="PF02800">
    <property type="entry name" value="Gp_dh_C"/>
    <property type="match status" value="1"/>
</dbReference>
<dbReference type="Pfam" id="PF00044">
    <property type="entry name" value="Gp_dh_N"/>
    <property type="match status" value="1"/>
</dbReference>
<dbReference type="PIRSF" id="PIRSF000149">
    <property type="entry name" value="GAP_DH"/>
    <property type="match status" value="1"/>
</dbReference>
<dbReference type="PRINTS" id="PR00078">
    <property type="entry name" value="G3PDHDRGNASE"/>
</dbReference>
<dbReference type="SMART" id="SM00846">
    <property type="entry name" value="Gp_dh_N"/>
    <property type="match status" value="1"/>
</dbReference>
<dbReference type="SUPFAM" id="SSF55347">
    <property type="entry name" value="Glyceraldehyde-3-phosphate dehydrogenase-like, C-terminal domain"/>
    <property type="match status" value="1"/>
</dbReference>
<dbReference type="SUPFAM" id="SSF51735">
    <property type="entry name" value="NAD(P)-binding Rossmann-fold domains"/>
    <property type="match status" value="1"/>
</dbReference>
<dbReference type="PROSITE" id="PS00071">
    <property type="entry name" value="GAPDH"/>
    <property type="match status" value="1"/>
</dbReference>
<evidence type="ECO:0000250" key="1">
    <source>
        <dbReference type="UniProtKB" id="P00362"/>
    </source>
</evidence>
<evidence type="ECO:0000250" key="2">
    <source>
        <dbReference type="UniProtKB" id="P54226"/>
    </source>
</evidence>
<evidence type="ECO:0000250" key="3">
    <source>
        <dbReference type="UniProtKB" id="P9WN83"/>
    </source>
</evidence>
<evidence type="ECO:0000305" key="4"/>
<evidence type="ECO:0007829" key="5">
    <source>
        <dbReference type="PDB" id="7JWK"/>
    </source>
</evidence>
<organism>
    <name type="scientific">Mycoplasma genitalium (strain ATCC 33530 / DSM 19775 / NCTC 10195 / G37)</name>
    <name type="common">Mycoplasmoides genitalium</name>
    <dbReference type="NCBI Taxonomy" id="243273"/>
    <lineage>
        <taxon>Bacteria</taxon>
        <taxon>Bacillati</taxon>
        <taxon>Mycoplasmatota</taxon>
        <taxon>Mycoplasmoidales</taxon>
        <taxon>Mycoplasmoidaceae</taxon>
        <taxon>Mycoplasmoides</taxon>
    </lineage>
</organism>
<feature type="chain" id="PRO_0000145668" description="Glyceraldehyde-3-phosphate dehydrogenase">
    <location>
        <begin position="1"/>
        <end position="337"/>
    </location>
</feature>
<feature type="active site" description="Nucleophile" evidence="1">
    <location>
        <position position="157"/>
    </location>
</feature>
<feature type="binding site" evidence="1">
    <location>
        <begin position="17"/>
        <end position="18"/>
    </location>
    <ligand>
        <name>NAD(+)</name>
        <dbReference type="ChEBI" id="CHEBI:57540"/>
    </ligand>
</feature>
<feature type="binding site" evidence="1">
    <location>
        <position position="39"/>
    </location>
    <ligand>
        <name>NAD(+)</name>
        <dbReference type="ChEBI" id="CHEBI:57540"/>
    </ligand>
</feature>
<feature type="binding site" evidence="1">
    <location>
        <position position="83"/>
    </location>
    <ligand>
        <name>NAD(+)</name>
        <dbReference type="ChEBI" id="CHEBI:57540"/>
    </ligand>
</feature>
<feature type="binding site" evidence="1">
    <location>
        <position position="125"/>
    </location>
    <ligand>
        <name>NAD(+)</name>
        <dbReference type="ChEBI" id="CHEBI:57540"/>
    </ligand>
</feature>
<feature type="binding site" evidence="1">
    <location>
        <begin position="156"/>
        <end position="158"/>
    </location>
    <ligand>
        <name>D-glyceraldehyde 3-phosphate</name>
        <dbReference type="ChEBI" id="CHEBI:59776"/>
    </ligand>
</feature>
<feature type="binding site" evidence="1">
    <location>
        <position position="187"/>
    </location>
    <ligand>
        <name>D-glyceraldehyde 3-phosphate</name>
        <dbReference type="ChEBI" id="CHEBI:59776"/>
    </ligand>
</feature>
<feature type="binding site" evidence="1">
    <location>
        <position position="202"/>
    </location>
    <ligand>
        <name>D-glyceraldehyde 3-phosphate</name>
        <dbReference type="ChEBI" id="CHEBI:59776"/>
    </ligand>
</feature>
<feature type="binding site" evidence="1">
    <location>
        <begin position="215"/>
        <end position="216"/>
    </location>
    <ligand>
        <name>D-glyceraldehyde 3-phosphate</name>
        <dbReference type="ChEBI" id="CHEBI:59776"/>
    </ligand>
</feature>
<feature type="binding site" evidence="1">
    <location>
        <position position="238"/>
    </location>
    <ligand>
        <name>D-glyceraldehyde 3-phosphate</name>
        <dbReference type="ChEBI" id="CHEBI:59776"/>
    </ligand>
</feature>
<feature type="binding site" evidence="1">
    <location>
        <position position="319"/>
    </location>
    <ligand>
        <name>NAD(+)</name>
        <dbReference type="ChEBI" id="CHEBI:57540"/>
    </ligand>
</feature>
<feature type="site" description="Activates thiol group during catalysis" evidence="1">
    <location>
        <position position="184"/>
    </location>
</feature>
<feature type="strand" evidence="5">
    <location>
        <begin position="8"/>
        <end position="14"/>
    </location>
</feature>
<feature type="helix" evidence="5">
    <location>
        <begin position="17"/>
        <end position="26"/>
    </location>
</feature>
<feature type="strand" evidence="5">
    <location>
        <begin position="32"/>
        <end position="38"/>
    </location>
</feature>
<feature type="helix" evidence="5">
    <location>
        <begin position="43"/>
        <end position="51"/>
    </location>
</feature>
<feature type="turn" evidence="5">
    <location>
        <begin position="54"/>
        <end position="56"/>
    </location>
</feature>
<feature type="strand" evidence="5">
    <location>
        <begin position="63"/>
        <end position="66"/>
    </location>
</feature>
<feature type="strand" evidence="5">
    <location>
        <begin position="69"/>
        <end position="72"/>
    </location>
</feature>
<feature type="strand" evidence="5">
    <location>
        <begin position="75"/>
        <end position="80"/>
    </location>
</feature>
<feature type="helix" evidence="5">
    <location>
        <begin position="85"/>
        <end position="87"/>
    </location>
</feature>
<feature type="turn" evidence="5">
    <location>
        <begin position="90"/>
        <end position="94"/>
    </location>
</feature>
<feature type="strand" evidence="5">
    <location>
        <begin position="96"/>
        <end position="100"/>
    </location>
</feature>
<feature type="strand" evidence="5">
    <location>
        <begin position="102"/>
        <end position="104"/>
    </location>
</feature>
<feature type="helix" evidence="5">
    <location>
        <begin position="108"/>
        <end position="116"/>
    </location>
</feature>
<feature type="strand" evidence="5">
    <location>
        <begin position="122"/>
        <end position="126"/>
    </location>
</feature>
<feature type="strand" evidence="5">
    <location>
        <begin position="133"/>
        <end position="135"/>
    </location>
</feature>
<feature type="turn" evidence="5">
    <location>
        <begin position="138"/>
        <end position="140"/>
    </location>
</feature>
<feature type="helix" evidence="5">
    <location>
        <begin position="142"/>
        <end position="144"/>
    </location>
</feature>
<feature type="strand" evidence="5">
    <location>
        <begin position="150"/>
        <end position="153"/>
    </location>
</feature>
<feature type="helix" evidence="5">
    <location>
        <begin position="157"/>
        <end position="172"/>
    </location>
</feature>
<feature type="strand" evidence="5">
    <location>
        <begin position="175"/>
        <end position="185"/>
    </location>
</feature>
<feature type="strand" evidence="5">
    <location>
        <begin position="190"/>
        <end position="194"/>
    </location>
</feature>
<feature type="turn" evidence="5">
    <location>
        <begin position="200"/>
        <end position="203"/>
    </location>
</feature>
<feature type="helix" evidence="5">
    <location>
        <begin position="206"/>
        <end position="208"/>
    </location>
</feature>
<feature type="strand" evidence="5">
    <location>
        <begin position="211"/>
        <end position="213"/>
    </location>
</feature>
<feature type="helix" evidence="5">
    <location>
        <begin position="217"/>
        <end position="224"/>
    </location>
</feature>
<feature type="helix" evidence="5">
    <location>
        <begin position="226"/>
        <end position="228"/>
    </location>
</feature>
<feature type="strand" evidence="5">
    <location>
        <begin position="231"/>
        <end position="240"/>
    </location>
</feature>
<feature type="strand" evidence="5">
    <location>
        <begin position="245"/>
        <end position="255"/>
    </location>
</feature>
<feature type="helix" evidence="5">
    <location>
        <begin position="259"/>
        <end position="268"/>
    </location>
</feature>
<feature type="strand" evidence="5">
    <location>
        <begin position="271"/>
        <end position="277"/>
    </location>
</feature>
<feature type="helix" evidence="5">
    <location>
        <begin position="283"/>
        <end position="286"/>
    </location>
</feature>
<feature type="strand" evidence="5">
    <location>
        <begin position="292"/>
        <end position="296"/>
    </location>
</feature>
<feature type="turn" evidence="5">
    <location>
        <begin position="297"/>
        <end position="299"/>
    </location>
</feature>
<feature type="strand" evidence="5">
    <location>
        <begin position="301"/>
        <end position="305"/>
    </location>
</feature>
<feature type="strand" evidence="5">
    <location>
        <begin position="308"/>
        <end position="317"/>
    </location>
</feature>
<feature type="helix" evidence="5">
    <location>
        <begin position="321"/>
        <end position="335"/>
    </location>
</feature>
<gene>
    <name type="primary">gapA</name>
    <name type="synonym">gap</name>
    <name type="ordered locus">MG301</name>
</gene>
<accession>P47543</accession>
<comment type="function">
    <text evidence="3">Catalyzes the oxidative phosphorylation of glyceraldehyde 3-phosphate (G3P) to 1,3-bisphosphoglycerate (BPG) using the cofactor NAD. The first reaction step involves the formation of a hemiacetal intermediate between G3P and a cysteine residue, and this hemiacetal intermediate is then oxidized to a thioester, with concomitant reduction of NAD to NADH. The reduced NADH is then exchanged with the second NAD, and the thioester is attacked by a nucleophilic inorganic phosphate to produce BPG.</text>
</comment>
<comment type="catalytic activity">
    <reaction evidence="3">
        <text>D-glyceraldehyde 3-phosphate + phosphate + NAD(+) = (2R)-3-phospho-glyceroyl phosphate + NADH + H(+)</text>
        <dbReference type="Rhea" id="RHEA:10300"/>
        <dbReference type="ChEBI" id="CHEBI:15378"/>
        <dbReference type="ChEBI" id="CHEBI:43474"/>
        <dbReference type="ChEBI" id="CHEBI:57540"/>
        <dbReference type="ChEBI" id="CHEBI:57604"/>
        <dbReference type="ChEBI" id="CHEBI:57945"/>
        <dbReference type="ChEBI" id="CHEBI:59776"/>
        <dbReference type="EC" id="1.2.1.12"/>
    </reaction>
</comment>
<comment type="pathway">
    <text evidence="4">Carbohydrate degradation; glycolysis; pyruvate from D-glyceraldehyde 3-phosphate: step 1/5.</text>
</comment>
<comment type="subunit">
    <text evidence="2">Homotetramer.</text>
</comment>
<comment type="subcellular location">
    <subcellularLocation>
        <location evidence="4">Cytoplasm</location>
    </subcellularLocation>
</comment>
<comment type="similarity">
    <text evidence="4">Belongs to the glyceraldehyde-3-phosphate dehydrogenase family.</text>
</comment>